<proteinExistence type="predicted"/>
<dbReference type="EMBL" id="FO081301">
    <property type="protein sequence ID" value="CCD70619.1"/>
    <property type="molecule type" value="Genomic_DNA"/>
</dbReference>
<dbReference type="RefSeq" id="NP_001024631.1">
    <property type="nucleotide sequence ID" value="NM_001029460.4"/>
</dbReference>
<dbReference type="BioGRID" id="45395">
    <property type="interactions" value="1"/>
</dbReference>
<dbReference type="FunCoup" id="Q8WT51">
    <property type="interactions" value="2"/>
</dbReference>
<dbReference type="IntAct" id="Q8WT51">
    <property type="interactions" value="1"/>
</dbReference>
<dbReference type="ESTHER" id="caeel-F35H12.5">
    <property type="family name" value="Duf_1057"/>
</dbReference>
<dbReference type="MEROPS" id="S33.B04"/>
<dbReference type="PaxDb" id="6239-F35H12.5a"/>
<dbReference type="PeptideAtlas" id="Q8WT51"/>
<dbReference type="EnsemblMetazoa" id="F35H12.5.1">
    <property type="protein sequence ID" value="F35H12.5.1"/>
    <property type="gene ID" value="WBGene00018077"/>
</dbReference>
<dbReference type="GeneID" id="180442"/>
<dbReference type="KEGG" id="cel:CELE_F35H12.5"/>
<dbReference type="UCSC" id="F35H12.5b.1">
    <property type="organism name" value="c. elegans"/>
</dbReference>
<dbReference type="AGR" id="WB:WBGene00018077"/>
<dbReference type="CTD" id="180442"/>
<dbReference type="WormBase" id="F35H12.5">
    <property type="protein sequence ID" value="CE29791"/>
    <property type="gene ID" value="WBGene00018077"/>
</dbReference>
<dbReference type="eggNOG" id="ENOG502SAAS">
    <property type="taxonomic scope" value="Eukaryota"/>
</dbReference>
<dbReference type="GeneTree" id="ENSGT00970000196669"/>
<dbReference type="HOGENOM" id="CLU_903808_0_0_1"/>
<dbReference type="InParanoid" id="Q8WT51"/>
<dbReference type="OMA" id="HNDFKYM"/>
<dbReference type="OrthoDB" id="6431331at2759"/>
<dbReference type="PhylomeDB" id="Q8WT51"/>
<dbReference type="PRO" id="PR:Q8WT51"/>
<dbReference type="Proteomes" id="UP000001940">
    <property type="component" value="Chromosome X"/>
</dbReference>
<dbReference type="Bgee" id="WBGene00018077">
    <property type="expression patterns" value="Expressed in embryo and 3 other cell types or tissues"/>
</dbReference>
<dbReference type="GO" id="GO:0016787">
    <property type="term" value="F:hydrolase activity"/>
    <property type="evidence" value="ECO:0007669"/>
    <property type="project" value="UniProtKB-KW"/>
</dbReference>
<dbReference type="FunFam" id="3.40.50.1820:FF:000493">
    <property type="entry name" value="Protein CBG12424"/>
    <property type="match status" value="1"/>
</dbReference>
<dbReference type="Gene3D" id="3.40.50.1820">
    <property type="entry name" value="alpha/beta hydrolase"/>
    <property type="match status" value="1"/>
</dbReference>
<dbReference type="InterPro" id="IPR029058">
    <property type="entry name" value="AB_hydrolase_fold"/>
</dbReference>
<dbReference type="InterPro" id="IPR010463">
    <property type="entry name" value="DUF1057"/>
</dbReference>
<dbReference type="PANTHER" id="PTHR47533:SF6">
    <property type="entry name" value="PROTEIN CBG08091"/>
    <property type="match status" value="1"/>
</dbReference>
<dbReference type="PANTHER" id="PTHR47533">
    <property type="entry name" value="PROTEIN CBG21859"/>
    <property type="match status" value="1"/>
</dbReference>
<dbReference type="Pfam" id="PF06342">
    <property type="entry name" value="DUF1057"/>
    <property type="match status" value="1"/>
</dbReference>
<dbReference type="SUPFAM" id="SSF53474">
    <property type="entry name" value="alpha/beta-Hydrolases"/>
    <property type="match status" value="1"/>
</dbReference>
<dbReference type="PROSITE" id="PS00120">
    <property type="entry name" value="LIPASE_SER"/>
    <property type="match status" value="1"/>
</dbReference>
<organism>
    <name type="scientific">Caenorhabditis elegans</name>
    <dbReference type="NCBI Taxonomy" id="6239"/>
    <lineage>
        <taxon>Eukaryota</taxon>
        <taxon>Metazoa</taxon>
        <taxon>Ecdysozoa</taxon>
        <taxon>Nematoda</taxon>
        <taxon>Chromadorea</taxon>
        <taxon>Rhabditida</taxon>
        <taxon>Rhabditina</taxon>
        <taxon>Rhabditomorpha</taxon>
        <taxon>Rhabditoidea</taxon>
        <taxon>Rhabditidae</taxon>
        <taxon>Peloderinae</taxon>
        <taxon>Caenorhabditis</taxon>
    </lineage>
</organism>
<reference key="1">
    <citation type="journal article" date="1998" name="Science">
        <title>Genome sequence of the nematode C. elegans: a platform for investigating biology.</title>
        <authorList>
            <consortium name="The C. elegans sequencing consortium"/>
        </authorList>
    </citation>
    <scope>NUCLEOTIDE SEQUENCE [LARGE SCALE GENOMIC DNA]</scope>
    <source>
        <strain>Bristol N2</strain>
    </source>
</reference>
<sequence>MFSSRHILSNVRPIIKNLDLTRGFSDRKTKYFDLNDLIKTVNVTYKTGVNLEETTTVESKYVDVTPSSNTKGTVVTLSGSPGTHNDFKYMKSFFEQKKIRLICTNYPGSEFVTGGLHNSYTNQDRNSYMKSLMETLELKNVNRLIIMGHSRGGENALQLTSMLSNDENWPLVGAVMINSPGFAPHKGISKRMGTINFIISLIKRHNKTINSILHPILHYFYNNLIGLRVSHGKVAAAAILPMQTFAFDEQKLSIDDLRAKPGIRAFYGYGSKDFLIDEHQSEEVAMYFSEEDHYVISNKQDAEKAIKEARKSFTTGKQFVTANFKEEGHFLQKTYPEFIVEVVDSIFDADKEVDTKI</sequence>
<keyword id="KW-0378">Hydrolase</keyword>
<keyword id="KW-1185">Reference proteome</keyword>
<feature type="chain" id="PRO_0000065322" description="Uncharacterized protein F35H12.5">
    <location>
        <begin position="1"/>
        <end position="357"/>
    </location>
</feature>
<protein>
    <recommendedName>
        <fullName>Uncharacterized protein F35H12.5</fullName>
    </recommendedName>
</protein>
<accession>Q8WT51</accession>
<gene>
    <name type="ORF">F35H12.5</name>
</gene>
<name>YL4M_CAEEL</name>